<feature type="chain" id="PRO_0000240461" description="DNA primase DnaG">
    <location>
        <begin position="1"/>
        <end position="444"/>
    </location>
</feature>
<feature type="domain" description="Toprim" evidence="1">
    <location>
        <begin position="173"/>
        <end position="250"/>
    </location>
</feature>
<feature type="region of interest" description="Disordered" evidence="2">
    <location>
        <begin position="302"/>
        <end position="354"/>
    </location>
</feature>
<feature type="compositionally biased region" description="Basic and acidic residues" evidence="2">
    <location>
        <begin position="308"/>
        <end position="354"/>
    </location>
</feature>
<feature type="binding site" evidence="1">
    <location>
        <position position="179"/>
    </location>
    <ligand>
        <name>Mg(2+)</name>
        <dbReference type="ChEBI" id="CHEBI:18420"/>
        <label>1</label>
        <note>catalytic</note>
    </ligand>
</feature>
<feature type="binding site" evidence="1">
    <location>
        <position position="221"/>
    </location>
    <ligand>
        <name>Mg(2+)</name>
        <dbReference type="ChEBI" id="CHEBI:18420"/>
        <label>1</label>
        <note>catalytic</note>
    </ligand>
</feature>
<feature type="binding site" evidence="1">
    <location>
        <position position="221"/>
    </location>
    <ligand>
        <name>Mg(2+)</name>
        <dbReference type="ChEBI" id="CHEBI:18420"/>
        <label>2</label>
    </ligand>
</feature>
<feature type="binding site" evidence="1">
    <location>
        <position position="223"/>
    </location>
    <ligand>
        <name>Mg(2+)</name>
        <dbReference type="ChEBI" id="CHEBI:18420"/>
        <label>2</label>
    </ligand>
</feature>
<protein>
    <recommendedName>
        <fullName evidence="1">DNA primase DnaG</fullName>
        <ecNumber evidence="1">2.7.7.101</ecNumber>
    </recommendedName>
</protein>
<gene>
    <name evidence="1" type="primary">dnaG</name>
    <name type="ordered locus">Msp_1356</name>
</gene>
<reference key="1">
    <citation type="journal article" date="2006" name="J. Bacteriol.">
        <title>The genome sequence of Methanosphaera stadtmanae reveals why this human intestinal archaeon is restricted to methanol and H2 for methane formation and ATP synthesis.</title>
        <authorList>
            <person name="Fricke W.F."/>
            <person name="Seedorf H."/>
            <person name="Henne A."/>
            <person name="Kruer M."/>
            <person name="Liesegang H."/>
            <person name="Hedderich R."/>
            <person name="Gottschalk G."/>
            <person name="Thauer R.K."/>
        </authorList>
    </citation>
    <scope>NUCLEOTIDE SEQUENCE [LARGE SCALE GENOMIC DNA]</scope>
    <source>
        <strain>ATCC 43021 / DSM 3091 / JCM 11832 / MCB-3</strain>
    </source>
</reference>
<evidence type="ECO:0000255" key="1">
    <source>
        <dbReference type="HAMAP-Rule" id="MF_00007"/>
    </source>
</evidence>
<evidence type="ECO:0000256" key="2">
    <source>
        <dbReference type="SAM" id="MobiDB-lite"/>
    </source>
</evidence>
<evidence type="ECO:0000305" key="3"/>
<name>DNAG_METST</name>
<organism>
    <name type="scientific">Methanosphaera stadtmanae (strain ATCC 43021 / DSM 3091 / JCM 11832 / MCB-3)</name>
    <dbReference type="NCBI Taxonomy" id="339860"/>
    <lineage>
        <taxon>Archaea</taxon>
        <taxon>Methanobacteriati</taxon>
        <taxon>Methanobacteriota</taxon>
        <taxon>Methanomada group</taxon>
        <taxon>Methanobacteria</taxon>
        <taxon>Methanobacteriales</taxon>
        <taxon>Methanobacteriaceae</taxon>
        <taxon>Methanosphaera</taxon>
    </lineage>
</organism>
<proteinExistence type="inferred from homology"/>
<accession>Q2NEM0</accession>
<sequence>MVKDEITTTKYLIHSQINAKGFVEKPDVVGAIFGQTEGLLSDSLDLRELQKTGRIGRIKVDMTNRSGRTKGEIIIPSSLDRIETTILAASLETINRVGPCEANLRVTKIEDVRAVKRRTIVERAKELYQNMMEEFTPESSRMIDEVKESIRRPEIIEYGEDNLPAGPNTPTSDAILIVEGRSDVLNLLKYGIKNTIAVEGVNVPKTVADLTKKRTVTAFLDGDRGGDLILKELLQIGDIDYVTRAPRGLEVEYLDKDQVIYALKNKTSVDKITSHANYNHNQHRYHNKPKSHDKFESKLHEVTSSVNKTDKYSQKNESKQFKQQKNENKQVKDNSKEKTQKSTEKHNETEETHLNKYELMLKELSGTGKGRLYDMDFNLLKEVKVSDIYNEVKNSKETIKNIVFDGIITQRIVDLSKEKNIECLVAVKMSEVVKKPETIKIITK</sequence>
<keyword id="KW-0235">DNA replication</keyword>
<keyword id="KW-0240">DNA-directed RNA polymerase</keyword>
<keyword id="KW-0271">Exosome</keyword>
<keyword id="KW-0460">Magnesium</keyword>
<keyword id="KW-0479">Metal-binding</keyword>
<keyword id="KW-0548">Nucleotidyltransferase</keyword>
<keyword id="KW-0639">Primosome</keyword>
<keyword id="KW-1185">Reference proteome</keyword>
<keyword id="KW-0804">Transcription</keyword>
<keyword id="KW-0808">Transferase</keyword>
<comment type="function">
    <text evidence="1">RNA polymerase that catalyzes the synthesis of short RNA molecules used as primers for DNA polymerase during DNA replication. Also part of the exosome, which is a complex involved in RNA degradation. Acts as a poly(A)-binding protein that enhances the interaction between heteromeric, adenine-rich transcripts and the exosome.</text>
</comment>
<comment type="catalytic activity">
    <reaction evidence="1">
        <text>ssDNA + n NTP = ssDNA/pppN(pN)n-1 hybrid + (n-1) diphosphate.</text>
        <dbReference type="EC" id="2.7.7.101"/>
    </reaction>
</comment>
<comment type="cofactor">
    <cofactor evidence="1">
        <name>Mg(2+)</name>
        <dbReference type="ChEBI" id="CHEBI:18420"/>
    </cofactor>
    <text evidence="1">Binds two Mg(2+) per subunit.</text>
</comment>
<comment type="subunit">
    <text evidence="1">Forms a ternary complex with MCM helicase and DNA. Component of the archaeal exosome complex.</text>
</comment>
<comment type="similarity">
    <text evidence="1">Belongs to the archaeal DnaG primase family.</text>
</comment>
<comment type="sequence caution" evidence="3">
    <conflict type="erroneous initiation">
        <sequence resource="EMBL-CDS" id="ABC57733"/>
    </conflict>
</comment>
<dbReference type="EC" id="2.7.7.101" evidence="1"/>
<dbReference type="EMBL" id="CP000102">
    <property type="protein sequence ID" value="ABC57733.1"/>
    <property type="status" value="ALT_INIT"/>
    <property type="molecule type" value="Genomic_DNA"/>
</dbReference>
<dbReference type="RefSeq" id="WP_048059908.1">
    <property type="nucleotide sequence ID" value="NC_007681.1"/>
</dbReference>
<dbReference type="SMR" id="Q2NEM0"/>
<dbReference type="STRING" id="339860.Msp_1356"/>
<dbReference type="GeneID" id="41325925"/>
<dbReference type="KEGG" id="mst:Msp_1356"/>
<dbReference type="eggNOG" id="arCOG04281">
    <property type="taxonomic scope" value="Archaea"/>
</dbReference>
<dbReference type="HOGENOM" id="CLU_034626_0_0_2"/>
<dbReference type="OrthoDB" id="8643at2157"/>
<dbReference type="Proteomes" id="UP000001931">
    <property type="component" value="Chromosome"/>
</dbReference>
<dbReference type="GO" id="GO:0005737">
    <property type="term" value="C:cytoplasm"/>
    <property type="evidence" value="ECO:0007669"/>
    <property type="project" value="TreeGrafter"/>
</dbReference>
<dbReference type="GO" id="GO:0000428">
    <property type="term" value="C:DNA-directed RNA polymerase complex"/>
    <property type="evidence" value="ECO:0007669"/>
    <property type="project" value="UniProtKB-KW"/>
</dbReference>
<dbReference type="GO" id="GO:0000178">
    <property type="term" value="C:exosome (RNase complex)"/>
    <property type="evidence" value="ECO:0007669"/>
    <property type="project" value="UniProtKB-KW"/>
</dbReference>
<dbReference type="GO" id="GO:1990077">
    <property type="term" value="C:primosome complex"/>
    <property type="evidence" value="ECO:0007669"/>
    <property type="project" value="UniProtKB-KW"/>
</dbReference>
<dbReference type="GO" id="GO:0003899">
    <property type="term" value="F:DNA-directed RNA polymerase activity"/>
    <property type="evidence" value="ECO:0007669"/>
    <property type="project" value="InterPro"/>
</dbReference>
<dbReference type="GO" id="GO:0046872">
    <property type="term" value="F:metal ion binding"/>
    <property type="evidence" value="ECO:0007669"/>
    <property type="project" value="UniProtKB-KW"/>
</dbReference>
<dbReference type="GO" id="GO:0008143">
    <property type="term" value="F:poly(A) binding"/>
    <property type="evidence" value="ECO:0007669"/>
    <property type="project" value="InterPro"/>
</dbReference>
<dbReference type="GO" id="GO:0006269">
    <property type="term" value="P:DNA replication, synthesis of primer"/>
    <property type="evidence" value="ECO:0007669"/>
    <property type="project" value="UniProtKB-UniRule"/>
</dbReference>
<dbReference type="CDD" id="cd01029">
    <property type="entry name" value="TOPRIM_primases"/>
    <property type="match status" value="1"/>
</dbReference>
<dbReference type="Gene3D" id="3.40.1360.10">
    <property type="match status" value="1"/>
</dbReference>
<dbReference type="HAMAP" id="MF_00007">
    <property type="entry name" value="DNA_primase_DnaG_arc"/>
    <property type="match status" value="1"/>
</dbReference>
<dbReference type="InterPro" id="IPR050219">
    <property type="entry name" value="DnaG_primase"/>
</dbReference>
<dbReference type="InterPro" id="IPR020607">
    <property type="entry name" value="Primase_DnaG_arc"/>
</dbReference>
<dbReference type="InterPro" id="IPR034154">
    <property type="entry name" value="TOPRIM_DnaG/twinkle"/>
</dbReference>
<dbReference type="InterPro" id="IPR006171">
    <property type="entry name" value="TOPRIM_dom"/>
</dbReference>
<dbReference type="NCBIfam" id="NF003108">
    <property type="entry name" value="PRK04031.1-1"/>
    <property type="match status" value="1"/>
</dbReference>
<dbReference type="PANTHER" id="PTHR30313">
    <property type="entry name" value="DNA PRIMASE"/>
    <property type="match status" value="1"/>
</dbReference>
<dbReference type="PANTHER" id="PTHR30313:SF2">
    <property type="entry name" value="DNA PRIMASE"/>
    <property type="match status" value="1"/>
</dbReference>
<dbReference type="Pfam" id="PF13662">
    <property type="entry name" value="Toprim_4"/>
    <property type="match status" value="1"/>
</dbReference>
<dbReference type="SMART" id="SM00493">
    <property type="entry name" value="TOPRIM"/>
    <property type="match status" value="1"/>
</dbReference>
<dbReference type="SUPFAM" id="SSF56731">
    <property type="entry name" value="DNA primase core"/>
    <property type="match status" value="1"/>
</dbReference>
<dbReference type="PROSITE" id="PS50880">
    <property type="entry name" value="TOPRIM"/>
    <property type="match status" value="1"/>
</dbReference>